<proteinExistence type="inferred from homology"/>
<feature type="chain" id="PRO_1000164701" description="Carbamoyl phosphate synthase large chain">
    <location>
        <begin position="1"/>
        <end position="1093"/>
    </location>
</feature>
<feature type="domain" description="ATP-grasp 1" evidence="1">
    <location>
        <begin position="143"/>
        <end position="338"/>
    </location>
</feature>
<feature type="domain" description="ATP-grasp 2" evidence="1">
    <location>
        <begin position="689"/>
        <end position="880"/>
    </location>
</feature>
<feature type="domain" description="MGS-like" evidence="1">
    <location>
        <begin position="953"/>
        <end position="1093"/>
    </location>
</feature>
<feature type="region of interest" description="Carboxyphosphate synthetic domain" evidence="1">
    <location>
        <begin position="1"/>
        <end position="412"/>
    </location>
</feature>
<feature type="region of interest" description="Oligomerization domain" evidence="1">
    <location>
        <begin position="413"/>
        <end position="560"/>
    </location>
</feature>
<feature type="region of interest" description="Carbamoyl phosphate synthetic domain" evidence="1">
    <location>
        <begin position="561"/>
        <end position="952"/>
    </location>
</feature>
<feature type="region of interest" description="Allosteric domain" evidence="1">
    <location>
        <begin position="953"/>
        <end position="1093"/>
    </location>
</feature>
<feature type="binding site" evidence="1">
    <location>
        <position position="139"/>
    </location>
    <ligand>
        <name>ATP</name>
        <dbReference type="ChEBI" id="CHEBI:30616"/>
        <label>1</label>
    </ligand>
</feature>
<feature type="binding site" evidence="1">
    <location>
        <position position="179"/>
    </location>
    <ligand>
        <name>ATP</name>
        <dbReference type="ChEBI" id="CHEBI:30616"/>
        <label>1</label>
    </ligand>
</feature>
<feature type="binding site" evidence="1">
    <location>
        <position position="185"/>
    </location>
    <ligand>
        <name>ATP</name>
        <dbReference type="ChEBI" id="CHEBI:30616"/>
        <label>1</label>
    </ligand>
</feature>
<feature type="binding site" evidence="1">
    <location>
        <position position="186"/>
    </location>
    <ligand>
        <name>ATP</name>
        <dbReference type="ChEBI" id="CHEBI:30616"/>
        <label>1</label>
    </ligand>
</feature>
<feature type="binding site" evidence="1">
    <location>
        <position position="218"/>
    </location>
    <ligand>
        <name>ATP</name>
        <dbReference type="ChEBI" id="CHEBI:30616"/>
        <label>1</label>
    </ligand>
</feature>
<feature type="binding site" evidence="1">
    <location>
        <position position="220"/>
    </location>
    <ligand>
        <name>ATP</name>
        <dbReference type="ChEBI" id="CHEBI:30616"/>
        <label>1</label>
    </ligand>
</feature>
<feature type="binding site" evidence="1">
    <location>
        <position position="225"/>
    </location>
    <ligand>
        <name>ATP</name>
        <dbReference type="ChEBI" id="CHEBI:30616"/>
        <label>1</label>
    </ligand>
</feature>
<feature type="binding site" evidence="1">
    <location>
        <position position="251"/>
    </location>
    <ligand>
        <name>ATP</name>
        <dbReference type="ChEBI" id="CHEBI:30616"/>
        <label>1</label>
    </ligand>
</feature>
<feature type="binding site" evidence="1">
    <location>
        <position position="252"/>
    </location>
    <ligand>
        <name>ATP</name>
        <dbReference type="ChEBI" id="CHEBI:30616"/>
        <label>1</label>
    </ligand>
</feature>
<feature type="binding site" evidence="1">
    <location>
        <position position="253"/>
    </location>
    <ligand>
        <name>ATP</name>
        <dbReference type="ChEBI" id="CHEBI:30616"/>
        <label>1</label>
    </ligand>
</feature>
<feature type="binding site" evidence="1">
    <location>
        <position position="295"/>
    </location>
    <ligand>
        <name>ATP</name>
        <dbReference type="ChEBI" id="CHEBI:30616"/>
        <label>1</label>
    </ligand>
</feature>
<feature type="binding site" evidence="1">
    <location>
        <position position="295"/>
    </location>
    <ligand>
        <name>Mg(2+)</name>
        <dbReference type="ChEBI" id="CHEBI:18420"/>
        <label>1</label>
    </ligand>
</feature>
<feature type="binding site" evidence="1">
    <location>
        <position position="295"/>
    </location>
    <ligand>
        <name>Mn(2+)</name>
        <dbReference type="ChEBI" id="CHEBI:29035"/>
        <label>1</label>
    </ligand>
</feature>
<feature type="binding site" evidence="1">
    <location>
        <position position="309"/>
    </location>
    <ligand>
        <name>ATP</name>
        <dbReference type="ChEBI" id="CHEBI:30616"/>
        <label>1</label>
    </ligand>
</feature>
<feature type="binding site" evidence="1">
    <location>
        <position position="309"/>
    </location>
    <ligand>
        <name>Mg(2+)</name>
        <dbReference type="ChEBI" id="CHEBI:18420"/>
        <label>1</label>
    </ligand>
</feature>
<feature type="binding site" evidence="1">
    <location>
        <position position="309"/>
    </location>
    <ligand>
        <name>Mg(2+)</name>
        <dbReference type="ChEBI" id="CHEBI:18420"/>
        <label>2</label>
    </ligand>
</feature>
<feature type="binding site" evidence="1">
    <location>
        <position position="309"/>
    </location>
    <ligand>
        <name>Mn(2+)</name>
        <dbReference type="ChEBI" id="CHEBI:29035"/>
        <label>1</label>
    </ligand>
</feature>
<feature type="binding site" evidence="1">
    <location>
        <position position="309"/>
    </location>
    <ligand>
        <name>Mn(2+)</name>
        <dbReference type="ChEBI" id="CHEBI:29035"/>
        <label>2</label>
    </ligand>
</feature>
<feature type="binding site" evidence="1">
    <location>
        <position position="311"/>
    </location>
    <ligand>
        <name>Mg(2+)</name>
        <dbReference type="ChEBI" id="CHEBI:18420"/>
        <label>2</label>
    </ligand>
</feature>
<feature type="binding site" evidence="1">
    <location>
        <position position="311"/>
    </location>
    <ligand>
        <name>Mn(2+)</name>
        <dbReference type="ChEBI" id="CHEBI:29035"/>
        <label>2</label>
    </ligand>
</feature>
<feature type="binding site" evidence="1">
    <location>
        <position position="725"/>
    </location>
    <ligand>
        <name>ATP</name>
        <dbReference type="ChEBI" id="CHEBI:30616"/>
        <label>2</label>
    </ligand>
</feature>
<feature type="binding site" evidence="1">
    <location>
        <position position="764"/>
    </location>
    <ligand>
        <name>ATP</name>
        <dbReference type="ChEBI" id="CHEBI:30616"/>
        <label>2</label>
    </ligand>
</feature>
<feature type="binding site" evidence="1">
    <location>
        <position position="766"/>
    </location>
    <ligand>
        <name>ATP</name>
        <dbReference type="ChEBI" id="CHEBI:30616"/>
        <label>2</label>
    </ligand>
</feature>
<feature type="binding site" evidence="1">
    <location>
        <position position="771"/>
    </location>
    <ligand>
        <name>ATP</name>
        <dbReference type="ChEBI" id="CHEBI:30616"/>
        <label>2</label>
    </ligand>
</feature>
<feature type="binding site" evidence="1">
    <location>
        <position position="796"/>
    </location>
    <ligand>
        <name>ATP</name>
        <dbReference type="ChEBI" id="CHEBI:30616"/>
        <label>2</label>
    </ligand>
</feature>
<feature type="binding site" evidence="1">
    <location>
        <position position="797"/>
    </location>
    <ligand>
        <name>ATP</name>
        <dbReference type="ChEBI" id="CHEBI:30616"/>
        <label>2</label>
    </ligand>
</feature>
<feature type="binding site" evidence="1">
    <location>
        <position position="798"/>
    </location>
    <ligand>
        <name>ATP</name>
        <dbReference type="ChEBI" id="CHEBI:30616"/>
        <label>2</label>
    </ligand>
</feature>
<feature type="binding site" evidence="1">
    <location>
        <position position="799"/>
    </location>
    <ligand>
        <name>ATP</name>
        <dbReference type="ChEBI" id="CHEBI:30616"/>
        <label>2</label>
    </ligand>
</feature>
<feature type="binding site" evidence="1">
    <location>
        <position position="839"/>
    </location>
    <ligand>
        <name>ATP</name>
        <dbReference type="ChEBI" id="CHEBI:30616"/>
        <label>2</label>
    </ligand>
</feature>
<feature type="binding site" evidence="1">
    <location>
        <position position="839"/>
    </location>
    <ligand>
        <name>Mg(2+)</name>
        <dbReference type="ChEBI" id="CHEBI:18420"/>
        <label>3</label>
    </ligand>
</feature>
<feature type="binding site" evidence="1">
    <location>
        <position position="839"/>
    </location>
    <ligand>
        <name>Mn(2+)</name>
        <dbReference type="ChEBI" id="CHEBI:29035"/>
        <label>3</label>
    </ligand>
</feature>
<feature type="binding site" evidence="1">
    <location>
        <position position="851"/>
    </location>
    <ligand>
        <name>ATP</name>
        <dbReference type="ChEBI" id="CHEBI:30616"/>
        <label>2</label>
    </ligand>
</feature>
<feature type="binding site" evidence="1">
    <location>
        <position position="851"/>
    </location>
    <ligand>
        <name>Mg(2+)</name>
        <dbReference type="ChEBI" id="CHEBI:18420"/>
        <label>3</label>
    </ligand>
</feature>
<feature type="binding site" evidence="1">
    <location>
        <position position="851"/>
    </location>
    <ligand>
        <name>Mg(2+)</name>
        <dbReference type="ChEBI" id="CHEBI:18420"/>
        <label>4</label>
    </ligand>
</feature>
<feature type="binding site" evidence="1">
    <location>
        <position position="851"/>
    </location>
    <ligand>
        <name>Mn(2+)</name>
        <dbReference type="ChEBI" id="CHEBI:29035"/>
        <label>3</label>
    </ligand>
</feature>
<feature type="binding site" evidence="1">
    <location>
        <position position="851"/>
    </location>
    <ligand>
        <name>Mn(2+)</name>
        <dbReference type="ChEBI" id="CHEBI:29035"/>
        <label>4</label>
    </ligand>
</feature>
<feature type="binding site" evidence="1">
    <location>
        <position position="853"/>
    </location>
    <ligand>
        <name>Mg(2+)</name>
        <dbReference type="ChEBI" id="CHEBI:18420"/>
        <label>4</label>
    </ligand>
</feature>
<feature type="binding site" evidence="1">
    <location>
        <position position="853"/>
    </location>
    <ligand>
        <name>Mn(2+)</name>
        <dbReference type="ChEBI" id="CHEBI:29035"/>
        <label>4</label>
    </ligand>
</feature>
<reference key="1">
    <citation type="journal article" date="2009" name="Appl. Environ. Microbiol.">
        <title>Three genomes from the phylum Acidobacteria provide insight into the lifestyles of these microorganisms in soils.</title>
        <authorList>
            <person name="Ward N.L."/>
            <person name="Challacombe J.F."/>
            <person name="Janssen P.H."/>
            <person name="Henrissat B."/>
            <person name="Coutinho P.M."/>
            <person name="Wu M."/>
            <person name="Xie G."/>
            <person name="Haft D.H."/>
            <person name="Sait M."/>
            <person name="Badger J."/>
            <person name="Barabote R.D."/>
            <person name="Bradley B."/>
            <person name="Brettin T.S."/>
            <person name="Brinkac L.M."/>
            <person name="Bruce D."/>
            <person name="Creasy T."/>
            <person name="Daugherty S.C."/>
            <person name="Davidsen T.M."/>
            <person name="DeBoy R.T."/>
            <person name="Detter J.C."/>
            <person name="Dodson R.J."/>
            <person name="Durkin A.S."/>
            <person name="Ganapathy A."/>
            <person name="Gwinn-Giglio M."/>
            <person name="Han C.S."/>
            <person name="Khouri H."/>
            <person name="Kiss H."/>
            <person name="Kothari S.P."/>
            <person name="Madupu R."/>
            <person name="Nelson K.E."/>
            <person name="Nelson W.C."/>
            <person name="Paulsen I."/>
            <person name="Penn K."/>
            <person name="Ren Q."/>
            <person name="Rosovitz M.J."/>
            <person name="Selengut J.D."/>
            <person name="Shrivastava S."/>
            <person name="Sullivan S.A."/>
            <person name="Tapia R."/>
            <person name="Thompson L.S."/>
            <person name="Watkins K.L."/>
            <person name="Yang Q."/>
            <person name="Yu C."/>
            <person name="Zafar N."/>
            <person name="Zhou L."/>
            <person name="Kuske C.R."/>
        </authorList>
    </citation>
    <scope>NUCLEOTIDE SEQUENCE [LARGE SCALE GENOMIC DNA]</scope>
    <source>
        <strain>ATCC 51196 / DSM 11244 / BCRC 80197 / JCM 7670 / NBRC 15755 / NCIMB 13165 / 161</strain>
    </source>
</reference>
<keyword id="KW-0028">Amino-acid biosynthesis</keyword>
<keyword id="KW-0055">Arginine biosynthesis</keyword>
<keyword id="KW-0067">ATP-binding</keyword>
<keyword id="KW-0436">Ligase</keyword>
<keyword id="KW-0460">Magnesium</keyword>
<keyword id="KW-0464">Manganese</keyword>
<keyword id="KW-0479">Metal-binding</keyword>
<keyword id="KW-0547">Nucleotide-binding</keyword>
<keyword id="KW-0665">Pyrimidine biosynthesis</keyword>
<keyword id="KW-1185">Reference proteome</keyword>
<keyword id="KW-0677">Repeat</keyword>
<sequence>MPRRNDIRKILVIGSGPIVIGQSAEFDYSGTQACKALKAEGYEVVLVNSNPATIMTDPELADRTYIEPLTVKYLDEILRIEAEMLAASGSNGKFAVLPTVGGQTALNLAVELADAGILDKYGVELIGAKLDAIKKAEDRLLFKDAMTRIGLDVPRSALVNNIRDGLEFATKIGFPVIIRPSFTLGGSGGGIGYNREELMEILARGLDLSPVHECLIEESVLGWKEYELEVMRDLADNVIIICSIENMDPMGVHTGDSITVAPAQTLTDREYQAMRDAALLVMREIGVETGGSNVQFAVNPQTGRMTVIEMNPRVSRSSALASKATGFPIAKIAAKLAVGYTLDEIPNDITRMTPACFEPTIDYVVTKIPKWQFEKFPGADENLGPQMKSVGEVMAIGRTFKESLMKALRSLETGKRVGAEVLEPRRLTQRLVTPQPERLNYVRFAFRQGLSVREVARMTSMDPWFLYQIKEITDTIAAIGDATFDNVSPEQLRKAKRMGISDERLAEVWGLTGNEGVAKVRELRQGHGIRPIYKLVDTCAAEFESATPYFYSSYEEEDEAPQTDKRKVIILGSGPNRIGQGIEFDYCCCHAAFALKEDGFEAIMVNCNPETVSTDYDTSDRLYFEPLTLEDVLAIYEHETANGADAGMIVQFGGQTPLNLALRLKQAGVKIIGTSPESIDLAEDRKSFGKLLEQLQIPQPQGATATSVEEALASAERIGYPVLVRPSYVLGGRAMVIAYDAAAVSHYMKEAVEYSQERPILIDHFLEDAVEVDVDALCDGTDVVIAGIMQHIEEAGIHSGDSSCVLPAVDLAPQVLDTIRDYTRKLALSLKVIGLVNLQFAIQRDKVYVIEVNPRASRTVPYVSKATGVPLAKIASRLMTGRKLSEFLPENIASGKDLGTGAHYYVKSPVFPWNKFPGVDTVLGPEMKSTGEVMGVADNFGEAFAKAQLSAGLILPSSGTVFFSVNDHDKAALVPLAKQYIDLGFQIVATEGTAKVLHKAGIQAESVYKVKEGRPNIVDLIKGQRIQLIINTPRGQDTFFDEQAIRRAAVLQRIPTITTIAAARAAAEGIAASQRKHITVNPLQLLHAGHAVK</sequence>
<dbReference type="EC" id="6.3.4.16" evidence="1"/>
<dbReference type="EC" id="6.3.5.5" evidence="1"/>
<dbReference type="EMBL" id="CP001472">
    <property type="protein sequence ID" value="ACO33826.1"/>
    <property type="molecule type" value="Genomic_DNA"/>
</dbReference>
<dbReference type="RefSeq" id="WP_015895860.1">
    <property type="nucleotide sequence ID" value="NC_012483.1"/>
</dbReference>
<dbReference type="SMR" id="C1F1S6"/>
<dbReference type="FunCoup" id="C1F1S6">
    <property type="interactions" value="542"/>
</dbReference>
<dbReference type="STRING" id="240015.ACP_0685"/>
<dbReference type="KEGG" id="aca:ACP_0685"/>
<dbReference type="eggNOG" id="COG0458">
    <property type="taxonomic scope" value="Bacteria"/>
</dbReference>
<dbReference type="HOGENOM" id="CLU_000513_1_0_0"/>
<dbReference type="InParanoid" id="C1F1S6"/>
<dbReference type="OrthoDB" id="9804197at2"/>
<dbReference type="UniPathway" id="UPA00068">
    <property type="reaction ID" value="UER00171"/>
</dbReference>
<dbReference type="UniPathway" id="UPA00070">
    <property type="reaction ID" value="UER00115"/>
</dbReference>
<dbReference type="Proteomes" id="UP000002207">
    <property type="component" value="Chromosome"/>
</dbReference>
<dbReference type="GO" id="GO:0005737">
    <property type="term" value="C:cytoplasm"/>
    <property type="evidence" value="ECO:0007669"/>
    <property type="project" value="TreeGrafter"/>
</dbReference>
<dbReference type="GO" id="GO:0005524">
    <property type="term" value="F:ATP binding"/>
    <property type="evidence" value="ECO:0007669"/>
    <property type="project" value="UniProtKB-UniRule"/>
</dbReference>
<dbReference type="GO" id="GO:0004087">
    <property type="term" value="F:carbamoyl-phosphate synthase (ammonia) activity"/>
    <property type="evidence" value="ECO:0007669"/>
    <property type="project" value="RHEA"/>
</dbReference>
<dbReference type="GO" id="GO:0004088">
    <property type="term" value="F:carbamoyl-phosphate synthase (glutamine-hydrolyzing) activity"/>
    <property type="evidence" value="ECO:0007669"/>
    <property type="project" value="UniProtKB-UniRule"/>
</dbReference>
<dbReference type="GO" id="GO:0046872">
    <property type="term" value="F:metal ion binding"/>
    <property type="evidence" value="ECO:0007669"/>
    <property type="project" value="UniProtKB-KW"/>
</dbReference>
<dbReference type="GO" id="GO:0044205">
    <property type="term" value="P:'de novo' UMP biosynthetic process"/>
    <property type="evidence" value="ECO:0007669"/>
    <property type="project" value="UniProtKB-UniRule"/>
</dbReference>
<dbReference type="GO" id="GO:0006541">
    <property type="term" value="P:glutamine metabolic process"/>
    <property type="evidence" value="ECO:0007669"/>
    <property type="project" value="TreeGrafter"/>
</dbReference>
<dbReference type="GO" id="GO:0006526">
    <property type="term" value="P:L-arginine biosynthetic process"/>
    <property type="evidence" value="ECO:0007669"/>
    <property type="project" value="UniProtKB-UniRule"/>
</dbReference>
<dbReference type="CDD" id="cd01424">
    <property type="entry name" value="MGS_CPS_II"/>
    <property type="match status" value="1"/>
</dbReference>
<dbReference type="FunFam" id="1.10.1030.10:FF:000002">
    <property type="entry name" value="Carbamoyl-phosphate synthase large chain"/>
    <property type="match status" value="1"/>
</dbReference>
<dbReference type="FunFam" id="3.30.1490.20:FF:000001">
    <property type="entry name" value="Carbamoyl-phosphate synthase large chain"/>
    <property type="match status" value="1"/>
</dbReference>
<dbReference type="FunFam" id="3.30.470.20:FF:000007">
    <property type="entry name" value="Carbamoyl-phosphate synthase large chain"/>
    <property type="match status" value="1"/>
</dbReference>
<dbReference type="FunFam" id="3.30.470.20:FF:000013">
    <property type="entry name" value="Carbamoyl-phosphate synthase large chain"/>
    <property type="match status" value="1"/>
</dbReference>
<dbReference type="FunFam" id="3.40.50.20:FF:000001">
    <property type="entry name" value="Carbamoyl-phosphate synthase large chain"/>
    <property type="match status" value="1"/>
</dbReference>
<dbReference type="FunFam" id="3.40.50.20:FF:000003">
    <property type="entry name" value="Carbamoyl-phosphate synthase large chain"/>
    <property type="match status" value="1"/>
</dbReference>
<dbReference type="Gene3D" id="3.40.50.20">
    <property type="match status" value="2"/>
</dbReference>
<dbReference type="Gene3D" id="3.30.1490.20">
    <property type="entry name" value="ATP-grasp fold, A domain"/>
    <property type="match status" value="1"/>
</dbReference>
<dbReference type="Gene3D" id="3.30.470.20">
    <property type="entry name" value="ATP-grasp fold, B domain"/>
    <property type="match status" value="2"/>
</dbReference>
<dbReference type="Gene3D" id="1.10.1030.10">
    <property type="entry name" value="Carbamoyl-phosphate synthetase, large subunit oligomerisation domain"/>
    <property type="match status" value="1"/>
</dbReference>
<dbReference type="Gene3D" id="3.40.50.1380">
    <property type="entry name" value="Methylglyoxal synthase-like domain"/>
    <property type="match status" value="1"/>
</dbReference>
<dbReference type="HAMAP" id="MF_01210_A">
    <property type="entry name" value="CPSase_L_chain_A"/>
    <property type="match status" value="1"/>
</dbReference>
<dbReference type="HAMAP" id="MF_01210_B">
    <property type="entry name" value="CPSase_L_chain_B"/>
    <property type="match status" value="1"/>
</dbReference>
<dbReference type="InterPro" id="IPR011761">
    <property type="entry name" value="ATP-grasp"/>
</dbReference>
<dbReference type="InterPro" id="IPR013815">
    <property type="entry name" value="ATP_grasp_subdomain_1"/>
</dbReference>
<dbReference type="InterPro" id="IPR006275">
    <property type="entry name" value="CarbamoylP_synth_lsu"/>
</dbReference>
<dbReference type="InterPro" id="IPR005480">
    <property type="entry name" value="CarbamoylP_synth_lsu_oligo"/>
</dbReference>
<dbReference type="InterPro" id="IPR036897">
    <property type="entry name" value="CarbamoylP_synth_lsu_oligo_sf"/>
</dbReference>
<dbReference type="InterPro" id="IPR005479">
    <property type="entry name" value="CbamoylP_synth_lsu-like_ATP-bd"/>
</dbReference>
<dbReference type="InterPro" id="IPR005483">
    <property type="entry name" value="CbamoylP_synth_lsu_CPSase_dom"/>
</dbReference>
<dbReference type="InterPro" id="IPR011607">
    <property type="entry name" value="MGS-like_dom"/>
</dbReference>
<dbReference type="InterPro" id="IPR036914">
    <property type="entry name" value="MGS-like_dom_sf"/>
</dbReference>
<dbReference type="InterPro" id="IPR033937">
    <property type="entry name" value="MGS_CPS_CarB"/>
</dbReference>
<dbReference type="InterPro" id="IPR016185">
    <property type="entry name" value="PreATP-grasp_dom_sf"/>
</dbReference>
<dbReference type="NCBIfam" id="TIGR01369">
    <property type="entry name" value="CPSaseII_lrg"/>
    <property type="match status" value="1"/>
</dbReference>
<dbReference type="NCBIfam" id="NF003671">
    <property type="entry name" value="PRK05294.1"/>
    <property type="match status" value="1"/>
</dbReference>
<dbReference type="NCBIfam" id="NF009455">
    <property type="entry name" value="PRK12815.1"/>
    <property type="match status" value="1"/>
</dbReference>
<dbReference type="PANTHER" id="PTHR11405:SF53">
    <property type="entry name" value="CARBAMOYL-PHOSPHATE SYNTHASE [AMMONIA], MITOCHONDRIAL"/>
    <property type="match status" value="1"/>
</dbReference>
<dbReference type="PANTHER" id="PTHR11405">
    <property type="entry name" value="CARBAMOYLTRANSFERASE FAMILY MEMBER"/>
    <property type="match status" value="1"/>
</dbReference>
<dbReference type="Pfam" id="PF02786">
    <property type="entry name" value="CPSase_L_D2"/>
    <property type="match status" value="2"/>
</dbReference>
<dbReference type="Pfam" id="PF02787">
    <property type="entry name" value="CPSase_L_D3"/>
    <property type="match status" value="1"/>
</dbReference>
<dbReference type="Pfam" id="PF02142">
    <property type="entry name" value="MGS"/>
    <property type="match status" value="1"/>
</dbReference>
<dbReference type="PRINTS" id="PR00098">
    <property type="entry name" value="CPSASE"/>
</dbReference>
<dbReference type="SMART" id="SM01096">
    <property type="entry name" value="CPSase_L_D3"/>
    <property type="match status" value="1"/>
</dbReference>
<dbReference type="SMART" id="SM00851">
    <property type="entry name" value="MGS"/>
    <property type="match status" value="1"/>
</dbReference>
<dbReference type="SUPFAM" id="SSF48108">
    <property type="entry name" value="Carbamoyl phosphate synthetase, large subunit connection domain"/>
    <property type="match status" value="1"/>
</dbReference>
<dbReference type="SUPFAM" id="SSF56059">
    <property type="entry name" value="Glutathione synthetase ATP-binding domain-like"/>
    <property type="match status" value="2"/>
</dbReference>
<dbReference type="SUPFAM" id="SSF52335">
    <property type="entry name" value="Methylglyoxal synthase-like"/>
    <property type="match status" value="1"/>
</dbReference>
<dbReference type="SUPFAM" id="SSF52440">
    <property type="entry name" value="PreATP-grasp domain"/>
    <property type="match status" value="2"/>
</dbReference>
<dbReference type="PROSITE" id="PS50975">
    <property type="entry name" value="ATP_GRASP"/>
    <property type="match status" value="2"/>
</dbReference>
<dbReference type="PROSITE" id="PS00866">
    <property type="entry name" value="CPSASE_1"/>
    <property type="match status" value="2"/>
</dbReference>
<dbReference type="PROSITE" id="PS00867">
    <property type="entry name" value="CPSASE_2"/>
    <property type="match status" value="2"/>
</dbReference>
<dbReference type="PROSITE" id="PS51855">
    <property type="entry name" value="MGS"/>
    <property type="match status" value="1"/>
</dbReference>
<organism>
    <name type="scientific">Acidobacterium capsulatum (strain ATCC 51196 / DSM 11244 / BCRC 80197 / JCM 7670 / NBRC 15755 / NCIMB 13165 / 161)</name>
    <dbReference type="NCBI Taxonomy" id="240015"/>
    <lineage>
        <taxon>Bacteria</taxon>
        <taxon>Pseudomonadati</taxon>
        <taxon>Acidobacteriota</taxon>
        <taxon>Terriglobia</taxon>
        <taxon>Terriglobales</taxon>
        <taxon>Acidobacteriaceae</taxon>
        <taxon>Acidobacterium</taxon>
    </lineage>
</organism>
<comment type="function">
    <text evidence="1">Large subunit of the glutamine-dependent carbamoyl phosphate synthetase (CPSase). CPSase catalyzes the formation of carbamoyl phosphate from the ammonia moiety of glutamine, carbonate, and phosphate donated by ATP, constituting the first step of 2 biosynthetic pathways, one leading to arginine and/or urea and the other to pyrimidine nucleotides. The large subunit (synthetase) binds the substrates ammonia (free or transferred from glutamine from the small subunit), hydrogencarbonate and ATP and carries out an ATP-coupled ligase reaction, activating hydrogencarbonate by forming carboxy phosphate which reacts with ammonia to form carbamoyl phosphate.</text>
</comment>
<comment type="catalytic activity">
    <reaction evidence="1">
        <text>hydrogencarbonate + L-glutamine + 2 ATP + H2O = carbamoyl phosphate + L-glutamate + 2 ADP + phosphate + 2 H(+)</text>
        <dbReference type="Rhea" id="RHEA:18633"/>
        <dbReference type="ChEBI" id="CHEBI:15377"/>
        <dbReference type="ChEBI" id="CHEBI:15378"/>
        <dbReference type="ChEBI" id="CHEBI:17544"/>
        <dbReference type="ChEBI" id="CHEBI:29985"/>
        <dbReference type="ChEBI" id="CHEBI:30616"/>
        <dbReference type="ChEBI" id="CHEBI:43474"/>
        <dbReference type="ChEBI" id="CHEBI:58228"/>
        <dbReference type="ChEBI" id="CHEBI:58359"/>
        <dbReference type="ChEBI" id="CHEBI:456216"/>
        <dbReference type="EC" id="6.3.5.5"/>
    </reaction>
</comment>
<comment type="catalytic activity">
    <molecule>Carbamoyl phosphate synthase large chain</molecule>
    <reaction evidence="1">
        <text>hydrogencarbonate + NH4(+) + 2 ATP = carbamoyl phosphate + 2 ADP + phosphate + 2 H(+)</text>
        <dbReference type="Rhea" id="RHEA:18029"/>
        <dbReference type="ChEBI" id="CHEBI:15378"/>
        <dbReference type="ChEBI" id="CHEBI:17544"/>
        <dbReference type="ChEBI" id="CHEBI:28938"/>
        <dbReference type="ChEBI" id="CHEBI:30616"/>
        <dbReference type="ChEBI" id="CHEBI:43474"/>
        <dbReference type="ChEBI" id="CHEBI:58228"/>
        <dbReference type="ChEBI" id="CHEBI:456216"/>
        <dbReference type="EC" id="6.3.4.16"/>
    </reaction>
</comment>
<comment type="cofactor">
    <cofactor evidence="1">
        <name>Mg(2+)</name>
        <dbReference type="ChEBI" id="CHEBI:18420"/>
    </cofactor>
    <cofactor evidence="1">
        <name>Mn(2+)</name>
        <dbReference type="ChEBI" id="CHEBI:29035"/>
    </cofactor>
    <text evidence="1">Binds 4 Mg(2+) or Mn(2+) ions per subunit.</text>
</comment>
<comment type="pathway">
    <text evidence="1">Amino-acid biosynthesis; L-arginine biosynthesis; carbamoyl phosphate from bicarbonate: step 1/1.</text>
</comment>
<comment type="pathway">
    <text evidence="1">Pyrimidine metabolism; UMP biosynthesis via de novo pathway; (S)-dihydroorotate from bicarbonate: step 1/3.</text>
</comment>
<comment type="subunit">
    <text evidence="1">Composed of two chains; the small (or glutamine) chain promotes the hydrolysis of glutamine to ammonia, which is used by the large (or ammonia) chain to synthesize carbamoyl phosphate. Tetramer of heterodimers (alpha,beta)4.</text>
</comment>
<comment type="domain">
    <text evidence="1">The large subunit is composed of 2 ATP-grasp domains that are involved in binding the 2 ATP molecules needed for carbamoyl phosphate synthesis. The N-terminal ATP-grasp domain (referred to as the carboxyphosphate synthetic component) catalyzes the ATP-dependent phosphorylation of hydrogencarbonate to carboxyphosphate and the subsequent nucleophilic attack by ammonia to form a carbamate intermediate. The C-terminal ATP-grasp domain (referred to as the carbamoyl phosphate synthetic component) then catalyzes the phosphorylation of carbamate with the second ATP to form the end product carbamoyl phosphate. The reactive and unstable enzyme intermediates are sequentially channeled from one active site to the next through the interior of the protein over a distance of at least 96 A.</text>
</comment>
<comment type="similarity">
    <text evidence="1">Belongs to the CarB family.</text>
</comment>
<accession>C1F1S6</accession>
<name>CARB_ACIC5</name>
<gene>
    <name evidence="1" type="primary">carB</name>
    <name type="ordered locus">ACP_0685</name>
</gene>
<evidence type="ECO:0000255" key="1">
    <source>
        <dbReference type="HAMAP-Rule" id="MF_01210"/>
    </source>
</evidence>
<protein>
    <recommendedName>
        <fullName evidence="1">Carbamoyl phosphate synthase large chain</fullName>
        <ecNumber evidence="1">6.3.4.16</ecNumber>
        <ecNumber evidence="1">6.3.5.5</ecNumber>
    </recommendedName>
    <alternativeName>
        <fullName evidence="1">Carbamoyl phosphate synthetase ammonia chain</fullName>
    </alternativeName>
</protein>